<protein>
    <recommendedName>
        <fullName>Serine/threonine-protein kinase tousled-like 2</fullName>
        <ecNumber evidence="2">2.7.11.1</ecNumber>
    </recommendedName>
    <alternativeName>
        <fullName>PKU-alpha</fullName>
    </alternativeName>
    <alternativeName>
        <fullName>Tousled-like kinase 2</fullName>
    </alternativeName>
</protein>
<dbReference type="EC" id="2.7.11.1" evidence="2"/>
<dbReference type="EMBL" id="AF045252">
    <property type="protein sequence ID" value="AAC02225.1"/>
    <property type="status" value="ALT_INIT"/>
    <property type="molecule type" value="mRNA"/>
</dbReference>
<dbReference type="EMBL" id="AF045254">
    <property type="protein sequence ID" value="AAC02227.1"/>
    <property type="molecule type" value="mRNA"/>
</dbReference>
<dbReference type="EMBL" id="AF045253">
    <property type="protein sequence ID" value="AAC02226.1"/>
    <property type="molecule type" value="mRNA"/>
</dbReference>
<dbReference type="EMBL" id="AK014829">
    <property type="protein sequence ID" value="BAB29570.2"/>
    <property type="molecule type" value="mRNA"/>
</dbReference>
<dbReference type="EMBL" id="AL645471">
    <property type="status" value="NOT_ANNOTATED_CDS"/>
    <property type="molecule type" value="Genomic_DNA"/>
</dbReference>
<dbReference type="CCDS" id="CCDS36356.2">
    <molecule id="O55047-1"/>
</dbReference>
<dbReference type="CCDS" id="CCDS79062.1">
    <molecule id="O55047-2"/>
</dbReference>
<dbReference type="RefSeq" id="NP_001281260.1">
    <molecule id="O55047-1"/>
    <property type="nucleotide sequence ID" value="NM_001294331.1"/>
</dbReference>
<dbReference type="RefSeq" id="NP_001281263.1">
    <molecule id="O55047-2"/>
    <property type="nucleotide sequence ID" value="NM_001294334.1"/>
</dbReference>
<dbReference type="RefSeq" id="XP_011247316.1">
    <molecule id="O55047-1"/>
    <property type="nucleotide sequence ID" value="XM_011249014.4"/>
</dbReference>
<dbReference type="RefSeq" id="XP_036012594.1">
    <molecule id="O55047-1"/>
    <property type="nucleotide sequence ID" value="XM_036156701.1"/>
</dbReference>
<dbReference type="RefSeq" id="XP_036012596.1">
    <molecule id="O55047-1"/>
    <property type="nucleotide sequence ID" value="XM_036156703.1"/>
</dbReference>
<dbReference type="SMR" id="O55047"/>
<dbReference type="BioGRID" id="204893">
    <property type="interactions" value="3"/>
</dbReference>
<dbReference type="FunCoup" id="O55047">
    <property type="interactions" value="4319"/>
</dbReference>
<dbReference type="IntAct" id="O55047">
    <property type="interactions" value="1"/>
</dbReference>
<dbReference type="STRING" id="10090.ENSMUSP00000102554"/>
<dbReference type="iPTMnet" id="O55047"/>
<dbReference type="PhosphoSitePlus" id="O55047"/>
<dbReference type="jPOST" id="O55047"/>
<dbReference type="PaxDb" id="10090-ENSMUSP00000102554"/>
<dbReference type="PeptideAtlas" id="O55047"/>
<dbReference type="ProteomicsDB" id="259201">
    <molecule id="O55047-1"/>
</dbReference>
<dbReference type="ProteomicsDB" id="259202">
    <molecule id="O55047-2"/>
</dbReference>
<dbReference type="ProteomicsDB" id="259203">
    <molecule id="O55047-3"/>
</dbReference>
<dbReference type="Pumba" id="O55047"/>
<dbReference type="Antibodypedia" id="31236">
    <property type="antibodies" value="371 antibodies from 31 providers"/>
</dbReference>
<dbReference type="DNASU" id="24086"/>
<dbReference type="Ensembl" id="ENSMUST00000015107.13">
    <molecule id="O55047-1"/>
    <property type="protein sequence ID" value="ENSMUSP00000015107.7"/>
    <property type="gene ID" value="ENSMUSG00000020694.18"/>
</dbReference>
<dbReference type="Ensembl" id="ENSMUST00000092537.10">
    <molecule id="O55047-2"/>
    <property type="protein sequence ID" value="ENSMUSP00000090198.4"/>
    <property type="gene ID" value="ENSMUSG00000020694.18"/>
</dbReference>
<dbReference type="Ensembl" id="ENSMUST00000106939.9">
    <molecule id="O55047-1"/>
    <property type="protein sequence ID" value="ENSMUSP00000102552.3"/>
    <property type="gene ID" value="ENSMUSG00000020694.18"/>
</dbReference>
<dbReference type="GeneID" id="24086"/>
<dbReference type="KEGG" id="mmu:24086"/>
<dbReference type="UCSC" id="uc007lxd.3">
    <molecule id="O55047-2"/>
    <property type="organism name" value="mouse"/>
</dbReference>
<dbReference type="UCSC" id="uc007lxg.3">
    <molecule id="O55047-1"/>
    <property type="organism name" value="mouse"/>
</dbReference>
<dbReference type="AGR" id="MGI:1346023"/>
<dbReference type="CTD" id="11011"/>
<dbReference type="MGI" id="MGI:1346023">
    <property type="gene designation" value="Tlk2"/>
</dbReference>
<dbReference type="VEuPathDB" id="HostDB:ENSMUSG00000020694"/>
<dbReference type="eggNOG" id="KOG1151">
    <property type="taxonomic scope" value="Eukaryota"/>
</dbReference>
<dbReference type="GeneTree" id="ENSGT00950000182984"/>
<dbReference type="HOGENOM" id="CLU_000288_85_1_1"/>
<dbReference type="InParanoid" id="O55047"/>
<dbReference type="OMA" id="NDEMVMI"/>
<dbReference type="OrthoDB" id="346907at2759"/>
<dbReference type="PhylomeDB" id="O55047"/>
<dbReference type="BioGRID-ORCS" id="24086">
    <property type="hits" value="9 hits in 82 CRISPR screens"/>
</dbReference>
<dbReference type="ChiTaRS" id="Tlk2">
    <property type="organism name" value="mouse"/>
</dbReference>
<dbReference type="PRO" id="PR:O55047"/>
<dbReference type="Proteomes" id="UP000000589">
    <property type="component" value="Chromosome 11"/>
</dbReference>
<dbReference type="RNAct" id="O55047">
    <property type="molecule type" value="protein"/>
</dbReference>
<dbReference type="Bgee" id="ENSMUSG00000020694">
    <property type="expression patterns" value="Expressed in undifferentiated genital tubercle and 263 other cell types or tissues"/>
</dbReference>
<dbReference type="ExpressionAtlas" id="O55047">
    <property type="expression patterns" value="baseline and differential"/>
</dbReference>
<dbReference type="GO" id="GO:0005882">
    <property type="term" value="C:intermediate filament"/>
    <property type="evidence" value="ECO:0000314"/>
    <property type="project" value="UniProtKB"/>
</dbReference>
<dbReference type="GO" id="GO:0005654">
    <property type="term" value="C:nucleoplasm"/>
    <property type="evidence" value="ECO:0007669"/>
    <property type="project" value="UniProtKB-SubCell"/>
</dbReference>
<dbReference type="GO" id="GO:0005634">
    <property type="term" value="C:nucleus"/>
    <property type="evidence" value="ECO:0000314"/>
    <property type="project" value="UniProtKB"/>
</dbReference>
<dbReference type="GO" id="GO:0048471">
    <property type="term" value="C:perinuclear region of cytoplasm"/>
    <property type="evidence" value="ECO:0000314"/>
    <property type="project" value="UniProtKB"/>
</dbReference>
<dbReference type="GO" id="GO:0005524">
    <property type="term" value="F:ATP binding"/>
    <property type="evidence" value="ECO:0000250"/>
    <property type="project" value="UniProtKB"/>
</dbReference>
<dbReference type="GO" id="GO:0106310">
    <property type="term" value="F:protein serine kinase activity"/>
    <property type="evidence" value="ECO:0007669"/>
    <property type="project" value="RHEA"/>
</dbReference>
<dbReference type="GO" id="GO:0004674">
    <property type="term" value="F:protein serine/threonine kinase activity"/>
    <property type="evidence" value="ECO:0000250"/>
    <property type="project" value="UniProtKB"/>
</dbReference>
<dbReference type="GO" id="GO:0044325">
    <property type="term" value="F:transmembrane transporter binding"/>
    <property type="evidence" value="ECO:0000353"/>
    <property type="project" value="ARUK-UCL"/>
</dbReference>
<dbReference type="GO" id="GO:0030154">
    <property type="term" value="P:cell differentiation"/>
    <property type="evidence" value="ECO:0007669"/>
    <property type="project" value="UniProtKB-KW"/>
</dbReference>
<dbReference type="GO" id="GO:0006325">
    <property type="term" value="P:chromatin organization"/>
    <property type="evidence" value="ECO:0007669"/>
    <property type="project" value="UniProtKB-KW"/>
</dbReference>
<dbReference type="GO" id="GO:0007059">
    <property type="term" value="P:chromosome segregation"/>
    <property type="evidence" value="ECO:0000250"/>
    <property type="project" value="UniProtKB"/>
</dbReference>
<dbReference type="GO" id="GO:0006974">
    <property type="term" value="P:DNA damage response"/>
    <property type="evidence" value="ECO:0007669"/>
    <property type="project" value="UniProtKB-KW"/>
</dbReference>
<dbReference type="GO" id="GO:0035556">
    <property type="term" value="P:intracellular signal transduction"/>
    <property type="evidence" value="ECO:0000250"/>
    <property type="project" value="UniProtKB"/>
</dbReference>
<dbReference type="GO" id="GO:0032435">
    <property type="term" value="P:negative regulation of proteasomal ubiquitin-dependent protein catabolic process"/>
    <property type="evidence" value="ECO:0000250"/>
    <property type="project" value="UniProtKB"/>
</dbReference>
<dbReference type="GO" id="GO:0018105">
    <property type="term" value="P:peptidyl-serine phosphorylation"/>
    <property type="evidence" value="ECO:0000250"/>
    <property type="project" value="UniProtKB"/>
</dbReference>
<dbReference type="GO" id="GO:0006468">
    <property type="term" value="P:protein phosphorylation"/>
    <property type="evidence" value="ECO:0000250"/>
    <property type="project" value="UniProtKB"/>
</dbReference>
<dbReference type="GO" id="GO:1902275">
    <property type="term" value="P:regulation of chromatin organization"/>
    <property type="evidence" value="ECO:0000250"/>
    <property type="project" value="UniProtKB"/>
</dbReference>
<dbReference type="GO" id="GO:0007283">
    <property type="term" value="P:spermatogenesis"/>
    <property type="evidence" value="ECO:0007669"/>
    <property type="project" value="UniProtKB-KW"/>
</dbReference>
<dbReference type="CDD" id="cd14041">
    <property type="entry name" value="STKc_TLK2"/>
    <property type="match status" value="1"/>
</dbReference>
<dbReference type="FunFam" id="1.10.510.10:FF:000037">
    <property type="entry name" value="Serine/threonine-protein kinase tousled-like 2"/>
    <property type="match status" value="1"/>
</dbReference>
<dbReference type="Gene3D" id="1.10.510.10">
    <property type="entry name" value="Transferase(Phosphotransferase) domain 1"/>
    <property type="match status" value="1"/>
</dbReference>
<dbReference type="InterPro" id="IPR011009">
    <property type="entry name" value="Kinase-like_dom_sf"/>
</dbReference>
<dbReference type="InterPro" id="IPR000719">
    <property type="entry name" value="Prot_kinase_dom"/>
</dbReference>
<dbReference type="InterPro" id="IPR017441">
    <property type="entry name" value="Protein_kinase_ATP_BS"/>
</dbReference>
<dbReference type="InterPro" id="IPR008271">
    <property type="entry name" value="Ser/Thr_kinase_AS"/>
</dbReference>
<dbReference type="PANTHER" id="PTHR22974">
    <property type="entry name" value="MIXED LINEAGE PROTEIN KINASE"/>
    <property type="match status" value="1"/>
</dbReference>
<dbReference type="PANTHER" id="PTHR22974:SF20">
    <property type="entry name" value="SERINE_THREONINE-PROTEIN KINASE TOUSLED-LIKE 2"/>
    <property type="match status" value="1"/>
</dbReference>
<dbReference type="Pfam" id="PF00069">
    <property type="entry name" value="Pkinase"/>
    <property type="match status" value="1"/>
</dbReference>
<dbReference type="SMART" id="SM00220">
    <property type="entry name" value="S_TKc"/>
    <property type="match status" value="1"/>
</dbReference>
<dbReference type="SUPFAM" id="SSF56112">
    <property type="entry name" value="Protein kinase-like (PK-like)"/>
    <property type="match status" value="1"/>
</dbReference>
<dbReference type="PROSITE" id="PS00107">
    <property type="entry name" value="PROTEIN_KINASE_ATP"/>
    <property type="match status" value="1"/>
</dbReference>
<dbReference type="PROSITE" id="PS50011">
    <property type="entry name" value="PROTEIN_KINASE_DOM"/>
    <property type="match status" value="1"/>
</dbReference>
<dbReference type="PROSITE" id="PS00108">
    <property type="entry name" value="PROTEIN_KINASE_ST"/>
    <property type="match status" value="1"/>
</dbReference>
<name>TLK2_MOUSE</name>
<keyword id="KW-0025">Alternative splicing</keyword>
<keyword id="KW-0067">ATP-binding</keyword>
<keyword id="KW-0131">Cell cycle</keyword>
<keyword id="KW-0156">Chromatin regulator</keyword>
<keyword id="KW-0175">Coiled coil</keyword>
<keyword id="KW-0963">Cytoplasm</keyword>
<keyword id="KW-0206">Cytoskeleton</keyword>
<keyword id="KW-0217">Developmental protein</keyword>
<keyword id="KW-0221">Differentiation</keyword>
<keyword id="KW-0227">DNA damage</keyword>
<keyword id="KW-0418">Kinase</keyword>
<keyword id="KW-0547">Nucleotide-binding</keyword>
<keyword id="KW-0539">Nucleus</keyword>
<keyword id="KW-0597">Phosphoprotein</keyword>
<keyword id="KW-1185">Reference proteome</keyword>
<keyword id="KW-0723">Serine/threonine-protein kinase</keyword>
<keyword id="KW-0744">Spermatogenesis</keyword>
<keyword id="KW-0808">Transferase</keyword>
<proteinExistence type="evidence at protein level"/>
<feature type="chain" id="PRO_0000086755" description="Serine/threonine-protein kinase tousled-like 2">
    <location>
        <begin position="1"/>
        <end position="718"/>
    </location>
</feature>
<feature type="domain" description="Protein kinase" evidence="4">
    <location>
        <begin position="408"/>
        <end position="687"/>
    </location>
</feature>
<feature type="region of interest" description="Disordered" evidence="6">
    <location>
        <begin position="24"/>
        <end position="85"/>
    </location>
</feature>
<feature type="region of interest" description="Disordered" evidence="6">
    <location>
        <begin position="147"/>
        <end position="176"/>
    </location>
</feature>
<feature type="region of interest" description="Required for interaction with TLK1 and DYNLL1/LC8" evidence="2">
    <location>
        <begin position="193"/>
        <end position="244"/>
    </location>
</feature>
<feature type="region of interest" description="Disordered" evidence="6">
    <location>
        <begin position="310"/>
        <end position="337"/>
    </location>
</feature>
<feature type="coiled-coil region" evidence="3">
    <location>
        <begin position="193"/>
        <end position="244"/>
    </location>
</feature>
<feature type="coiled-coil region" evidence="3">
    <location>
        <begin position="285"/>
        <end position="315"/>
    </location>
</feature>
<feature type="coiled-coil region" evidence="3">
    <location>
        <begin position="349"/>
        <end position="397"/>
    </location>
</feature>
<feature type="compositionally biased region" description="Polar residues" evidence="6">
    <location>
        <begin position="29"/>
        <end position="44"/>
    </location>
</feature>
<feature type="compositionally biased region" description="Basic and acidic residues" evidence="6">
    <location>
        <begin position="46"/>
        <end position="61"/>
    </location>
</feature>
<feature type="active site" description="Proton acceptor" evidence="4 5">
    <location>
        <position position="538"/>
    </location>
</feature>
<feature type="binding site" evidence="4">
    <location>
        <begin position="414"/>
        <end position="422"/>
    </location>
    <ligand>
        <name>ATP</name>
        <dbReference type="ChEBI" id="CHEBI:30616"/>
    </ligand>
</feature>
<feature type="binding site" evidence="4">
    <location>
        <position position="437"/>
    </location>
    <ligand>
        <name>ATP</name>
        <dbReference type="ChEBI" id="CHEBI:30616"/>
    </ligand>
</feature>
<feature type="modified residue" description="Phosphoserine" evidence="2">
    <location>
        <position position="73"/>
    </location>
</feature>
<feature type="modified residue" description="Phosphoserine" evidence="2">
    <location>
        <position position="102"/>
    </location>
</feature>
<feature type="modified residue" description="Phosphoserine; by CHEK1" evidence="2">
    <location>
        <position position="696"/>
    </location>
</feature>
<feature type="splice variant" id="VSP_050574" description="In isoform 3." evidence="10">
    <location>
        <begin position="2"/>
        <end position="117"/>
    </location>
</feature>
<feature type="splice variant" id="VSP_050575" description="In isoform 2." evidence="11">
    <original>E</original>
    <variation>EFAGGSGPGTSPGRSVPPVARSSPQHSLSNPLP</variation>
    <location>
        <position position="89"/>
    </location>
</feature>
<feature type="splice variant" id="VSP_050576" description="In isoform 2." evidence="11">
    <original>PFGHNQSQQDILQENTILKATEVQFPPKPVVTPEAKAFIRRCLAYRKEDRIDVQQLACDPYLLPHIRKSVSTSSPAGAAIASTSGASNNSSSN</original>
    <variation>VRKKAVEQPGAIPTTSLGFFFAVNHWNPESSGLKKIQTSQ</variation>
    <location>
        <begin position="626"/>
        <end position="718"/>
    </location>
</feature>
<feature type="sequence conflict" description="In Ref. 2; BAB29570." evidence="12" ref="2">
    <original>I</original>
    <variation>M</variation>
    <location>
        <position position="520"/>
    </location>
</feature>
<feature type="sequence conflict" description="In Ref. 2; BAB29570." evidence="12" ref="2">
    <original>K</original>
    <variation>T</variation>
    <location>
        <position position="525"/>
    </location>
</feature>
<feature type="sequence conflict" description="In Ref. 2; BAB29570." evidence="12" ref="2">
    <original>I</original>
    <variation>T</variation>
    <location>
        <position position="535"/>
    </location>
</feature>
<feature type="sequence conflict" description="In Ref. 2; BAB29570." evidence="12" ref="2">
    <original>K</original>
    <variation>E</variation>
    <location>
        <position position="540"/>
    </location>
</feature>
<feature type="sequence conflict" description="In Ref. 2; BAB29570." evidence="12" ref="2">
    <original>N</original>
    <variation>D</variation>
    <location>
        <position position="543"/>
    </location>
</feature>
<feature type="sequence conflict" description="In Ref. 2; BAB29570." evidence="12" ref="2">
    <original>N</original>
    <variation>D</variation>
    <location>
        <position position="548"/>
    </location>
</feature>
<feature type="sequence conflict" description="In Ref. 2; BAB29570." evidence="12" ref="2">
    <original>I</original>
    <variation>M</variation>
    <location>
        <position position="555"/>
    </location>
</feature>
<feature type="modified residue" description="Phosphoserine" evidence="14">
    <location sequence="O55047-2">
        <position position="94"/>
    </location>
</feature>
<feature type="modified residue" description="Phosphoserine" evidence="14">
    <location sequence="O55047-2">
        <position position="99"/>
    </location>
</feature>
<organism evidence="13">
    <name type="scientific">Mus musculus</name>
    <name type="common">Mouse</name>
    <dbReference type="NCBI Taxonomy" id="10090"/>
    <lineage>
        <taxon>Eukaryota</taxon>
        <taxon>Metazoa</taxon>
        <taxon>Chordata</taxon>
        <taxon>Craniata</taxon>
        <taxon>Vertebrata</taxon>
        <taxon>Euteleostomi</taxon>
        <taxon>Mammalia</taxon>
        <taxon>Eutheria</taxon>
        <taxon>Euarchontoglires</taxon>
        <taxon>Glires</taxon>
        <taxon>Rodentia</taxon>
        <taxon>Myomorpha</taxon>
        <taxon>Muroidea</taxon>
        <taxon>Muridae</taxon>
        <taxon>Murinae</taxon>
        <taxon>Mus</taxon>
        <taxon>Mus</taxon>
    </lineage>
</organism>
<sequence length="718" mass="82261">MMEELHSLDPRRQELLEARFTGVGVSKGPLNSESSNQSLCSVGSLSDKEVETPEKKQNDQRNRKRKAEPYDTSQGKGTPRGHKISDYFERRAEQPLYGLDGSAAKEASEEQSALPTLMSVMLAKPRLDTEQLAPRGAGLCFTFVSAQQNSPSSTGSGNTEHSCSSQKQISIQHRQTQSDLTIEKISALENSKNSDLEKKEGRIDDLLRANCDLRRQIDEQQKMLEKYKERLNRCVTMSKKLLIEKSKQEKMACRDKSMQDRLRLGHFTTVRHGASFTEQWTDGYAFQNLIKQQERINSQREEIERQRKMLAKRKPPAMGQAPPATNEQKQRKSKTNGAENETLTLAEYHEQEEIFKLRLGHLKKEEAEIQAELERLERVRNLHIRELKRIHNEDNSQFKDHPTLNDRYLLLHLLGRGGFSEVYKAFDLTEQRYVAVKIHQLNKNWRDEKKENYHKHACREYRIHKELDHPRIVKLYDYFSLDTDSFCTVLEYCEGNDLDFYLKQHKLMSEKEARSIIMQIVNALKYLNEIKPPIIHYDLKPGNILLVNGTACGEIKITDFGLSKIMDDDSYNSVDGMELTSQGAGTYWYLPPECFVVGKEPPKISNKVDVWSVGVIFYQCLYGRKPFGHNQSQQDILQENTILKATEVQFPPKPVVTPEAKAFIRRCLAYRKEDRIDVQQLACDPYLLPHIRKSVSTSSPAGAAIASTSGASNNSSSN</sequence>
<gene>
    <name type="primary">Tlk2</name>
    <name type="synonym">Tlk</name>
</gene>
<comment type="function">
    <text evidence="2">Serine/threonine-protein kinase involved in the process of chromatin assembly and probably also DNA replication, transcription, repair, and chromosome segregation (By similarity). Phosphorylates the chromatin assembly factors ASF1A and ASF1B (By similarity). Phosphorylation of ASF1A prevents its proteasome-mediated degradation, thereby enhancing chromatin assembly (By similarity). Negative regulator of amino acid starvation-induced autophagy (By similarity).</text>
</comment>
<comment type="function">
    <text evidence="7">Testis-specific isoforms may play a role in spermatogenesis. Highly expressed in embryos throughout development.</text>
</comment>
<comment type="catalytic activity">
    <reaction evidence="2">
        <text>L-seryl-[protein] + ATP = O-phospho-L-seryl-[protein] + ADP + H(+)</text>
        <dbReference type="Rhea" id="RHEA:17989"/>
        <dbReference type="Rhea" id="RHEA-COMP:9863"/>
        <dbReference type="Rhea" id="RHEA-COMP:11604"/>
        <dbReference type="ChEBI" id="CHEBI:15378"/>
        <dbReference type="ChEBI" id="CHEBI:29999"/>
        <dbReference type="ChEBI" id="CHEBI:30616"/>
        <dbReference type="ChEBI" id="CHEBI:83421"/>
        <dbReference type="ChEBI" id="CHEBI:456216"/>
        <dbReference type="EC" id="2.7.11.1"/>
    </reaction>
</comment>
<comment type="catalytic activity">
    <reaction evidence="2">
        <text>L-threonyl-[protein] + ATP = O-phospho-L-threonyl-[protein] + ADP + H(+)</text>
        <dbReference type="Rhea" id="RHEA:46608"/>
        <dbReference type="Rhea" id="RHEA-COMP:11060"/>
        <dbReference type="Rhea" id="RHEA-COMP:11605"/>
        <dbReference type="ChEBI" id="CHEBI:15378"/>
        <dbReference type="ChEBI" id="CHEBI:30013"/>
        <dbReference type="ChEBI" id="CHEBI:30616"/>
        <dbReference type="ChEBI" id="CHEBI:61977"/>
        <dbReference type="ChEBI" id="CHEBI:456216"/>
        <dbReference type="EC" id="2.7.11.1"/>
    </reaction>
</comment>
<comment type="cofactor">
    <cofactor evidence="2">
        <name>Mg(2+)</name>
        <dbReference type="ChEBI" id="CHEBI:18420"/>
    </cofactor>
</comment>
<comment type="activity regulation">
    <text evidence="2">Cell cycle-regulated, with maximal activity in the S-phase. Rapidly and transiently inhibited by phosphorylation following the generation of DNA double-stranded breaks during S-phase, probably by CHEK1, possibly at Ser-696. This inhibition is cell cycle checkpoint- and ATM-dependent.</text>
</comment>
<comment type="subunit">
    <text evidence="2 8">Monomer (By similarity). May form homodimers; homodimerization may enhance autophosphoylation and enzymatic activity (By similarity). Heterodimer with TLK1 (By similarity). Interacts with YWHAZ; association with 14-3-3 proteins such as YWHAZ regulates subcellular location (PubMed:10455159). May also interact with FEZ1/LZTS1 and FEZ2 (By similarity). Interacts with CHD7 and CHD8 (By similarity). Interacts with DYNLL1/LC8 (By similarity).</text>
</comment>
<comment type="subcellular location">
    <subcellularLocation>
        <location evidence="8">Nucleus</location>
    </subcellularLocation>
    <subcellularLocation>
        <location evidence="2">Nucleus</location>
        <location evidence="2">Nucleoplasm</location>
    </subcellularLocation>
    <subcellularLocation>
        <location evidence="8">Cytoplasm</location>
        <location evidence="8">Perinuclear region</location>
    </subcellularLocation>
    <subcellularLocation>
        <location evidence="8">Cytoplasm</location>
        <location evidence="8">Cytoskeleton</location>
    </subcellularLocation>
    <text evidence="8">Colocalizes with the cytoplasmic intermediate filament system during the G1 phase of the cell cycle. Present in the perinuclear region at S phase and in the nucleus at late G2.</text>
</comment>
<comment type="alternative products">
    <event type="alternative splicing"/>
    <isoform>
        <id>O55047-1</id>
        <name evidence="7">1</name>
        <sequence type="displayed"/>
    </isoform>
    <isoform>
        <id>O55047-2</id>
        <name evidence="12">2</name>
        <sequence type="described" ref="VSP_050575 VSP_050576"/>
    </isoform>
    <isoform>
        <id>O55047-3</id>
        <name evidence="7">3</name>
        <sequence type="described" ref="VSP_050574"/>
    </isoform>
    <text evidence="10">Additional isoforms seem to exist.</text>
</comment>
<comment type="tissue specificity">
    <text evidence="7 8 9 10">Ubiquitously expressed in all tissues examined, with high levels in heart and testis, in particular the pachytene spermatocytes and in round spermatids. Some evidence for the existence of a testis-specific isoform suggesting a role in spermatogenesis.</text>
</comment>
<comment type="PTM">
    <text evidence="1">Phosphorylated at Ser-696, probably by CHEK1.</text>
</comment>
<comment type="PTM">
    <text evidence="2">Autophosphorylated; phosphorylation promotes the assembly of higher order oligomers and enzymatic activity.</text>
</comment>
<comment type="similarity">
    <text evidence="4">Belongs to the protein kinase superfamily. Ser/Thr protein kinase family.</text>
</comment>
<comment type="sequence caution" evidence="12">
    <conflict type="erroneous initiation">
        <sequence resource="EMBL-CDS" id="AAC02225"/>
    </conflict>
</comment>
<reference evidence="12" key="1">
    <citation type="journal article" date="1999" name="Mol. Reprod. Dev.">
        <title>Tlk, a novel evolutionarily conserved murine serine threonine kinase, encodes multiple testis transcripts.</title>
        <authorList>
            <person name="Shalom S."/>
            <person name="Don J."/>
        </authorList>
    </citation>
    <scope>NUCLEOTIDE SEQUENCE [MRNA] (ISOFORMS 1 AND 3)</scope>
    <scope>FUNCTION</scope>
    <scope>TISSUE SPECIFICITY</scope>
    <source>
        <tissue evidence="7">Testis</tissue>
    </source>
</reference>
<reference key="2">
    <citation type="journal article" date="2005" name="Science">
        <title>The transcriptional landscape of the mammalian genome.</title>
        <authorList>
            <person name="Carninci P."/>
            <person name="Kasukawa T."/>
            <person name="Katayama S."/>
            <person name="Gough J."/>
            <person name="Frith M.C."/>
            <person name="Maeda N."/>
            <person name="Oyama R."/>
            <person name="Ravasi T."/>
            <person name="Lenhard B."/>
            <person name="Wells C."/>
            <person name="Kodzius R."/>
            <person name="Shimokawa K."/>
            <person name="Bajic V.B."/>
            <person name="Brenner S.E."/>
            <person name="Batalov S."/>
            <person name="Forrest A.R."/>
            <person name="Zavolan M."/>
            <person name="Davis M.J."/>
            <person name="Wilming L.G."/>
            <person name="Aidinis V."/>
            <person name="Allen J.E."/>
            <person name="Ambesi-Impiombato A."/>
            <person name="Apweiler R."/>
            <person name="Aturaliya R.N."/>
            <person name="Bailey T.L."/>
            <person name="Bansal M."/>
            <person name="Baxter L."/>
            <person name="Beisel K.W."/>
            <person name="Bersano T."/>
            <person name="Bono H."/>
            <person name="Chalk A.M."/>
            <person name="Chiu K.P."/>
            <person name="Choudhary V."/>
            <person name="Christoffels A."/>
            <person name="Clutterbuck D.R."/>
            <person name="Crowe M.L."/>
            <person name="Dalla E."/>
            <person name="Dalrymple B.P."/>
            <person name="de Bono B."/>
            <person name="Della Gatta G."/>
            <person name="di Bernardo D."/>
            <person name="Down T."/>
            <person name="Engstrom P."/>
            <person name="Fagiolini M."/>
            <person name="Faulkner G."/>
            <person name="Fletcher C.F."/>
            <person name="Fukushima T."/>
            <person name="Furuno M."/>
            <person name="Futaki S."/>
            <person name="Gariboldi M."/>
            <person name="Georgii-Hemming P."/>
            <person name="Gingeras T.R."/>
            <person name="Gojobori T."/>
            <person name="Green R.E."/>
            <person name="Gustincich S."/>
            <person name="Harbers M."/>
            <person name="Hayashi Y."/>
            <person name="Hensch T.K."/>
            <person name="Hirokawa N."/>
            <person name="Hill D."/>
            <person name="Huminiecki L."/>
            <person name="Iacono M."/>
            <person name="Ikeo K."/>
            <person name="Iwama A."/>
            <person name="Ishikawa T."/>
            <person name="Jakt M."/>
            <person name="Kanapin A."/>
            <person name="Katoh M."/>
            <person name="Kawasawa Y."/>
            <person name="Kelso J."/>
            <person name="Kitamura H."/>
            <person name="Kitano H."/>
            <person name="Kollias G."/>
            <person name="Krishnan S.P."/>
            <person name="Kruger A."/>
            <person name="Kummerfeld S.K."/>
            <person name="Kurochkin I.V."/>
            <person name="Lareau L.F."/>
            <person name="Lazarevic D."/>
            <person name="Lipovich L."/>
            <person name="Liu J."/>
            <person name="Liuni S."/>
            <person name="McWilliam S."/>
            <person name="Madan Babu M."/>
            <person name="Madera M."/>
            <person name="Marchionni L."/>
            <person name="Matsuda H."/>
            <person name="Matsuzawa S."/>
            <person name="Miki H."/>
            <person name="Mignone F."/>
            <person name="Miyake S."/>
            <person name="Morris K."/>
            <person name="Mottagui-Tabar S."/>
            <person name="Mulder N."/>
            <person name="Nakano N."/>
            <person name="Nakauchi H."/>
            <person name="Ng P."/>
            <person name="Nilsson R."/>
            <person name="Nishiguchi S."/>
            <person name="Nishikawa S."/>
            <person name="Nori F."/>
            <person name="Ohara O."/>
            <person name="Okazaki Y."/>
            <person name="Orlando V."/>
            <person name="Pang K.C."/>
            <person name="Pavan W.J."/>
            <person name="Pavesi G."/>
            <person name="Pesole G."/>
            <person name="Petrovsky N."/>
            <person name="Piazza S."/>
            <person name="Reed J."/>
            <person name="Reid J.F."/>
            <person name="Ring B.Z."/>
            <person name="Ringwald M."/>
            <person name="Rost B."/>
            <person name="Ruan Y."/>
            <person name="Salzberg S.L."/>
            <person name="Sandelin A."/>
            <person name="Schneider C."/>
            <person name="Schoenbach C."/>
            <person name="Sekiguchi K."/>
            <person name="Semple C.A."/>
            <person name="Seno S."/>
            <person name="Sessa L."/>
            <person name="Sheng Y."/>
            <person name="Shibata Y."/>
            <person name="Shimada H."/>
            <person name="Shimada K."/>
            <person name="Silva D."/>
            <person name="Sinclair B."/>
            <person name="Sperling S."/>
            <person name="Stupka E."/>
            <person name="Sugiura K."/>
            <person name="Sultana R."/>
            <person name="Takenaka Y."/>
            <person name="Taki K."/>
            <person name="Tammoja K."/>
            <person name="Tan S.L."/>
            <person name="Tang S."/>
            <person name="Taylor M.S."/>
            <person name="Tegner J."/>
            <person name="Teichmann S.A."/>
            <person name="Ueda H.R."/>
            <person name="van Nimwegen E."/>
            <person name="Verardo R."/>
            <person name="Wei C.L."/>
            <person name="Yagi K."/>
            <person name="Yamanishi H."/>
            <person name="Zabarovsky E."/>
            <person name="Zhu S."/>
            <person name="Zimmer A."/>
            <person name="Hide W."/>
            <person name="Bult C."/>
            <person name="Grimmond S.M."/>
            <person name="Teasdale R.D."/>
            <person name="Liu E.T."/>
            <person name="Brusic V."/>
            <person name="Quackenbush J."/>
            <person name="Wahlestedt C."/>
            <person name="Mattick J.S."/>
            <person name="Hume D.A."/>
            <person name="Kai C."/>
            <person name="Sasaki D."/>
            <person name="Tomaru Y."/>
            <person name="Fukuda S."/>
            <person name="Kanamori-Katayama M."/>
            <person name="Suzuki M."/>
            <person name="Aoki J."/>
            <person name="Arakawa T."/>
            <person name="Iida J."/>
            <person name="Imamura K."/>
            <person name="Itoh M."/>
            <person name="Kato T."/>
            <person name="Kawaji H."/>
            <person name="Kawagashira N."/>
            <person name="Kawashima T."/>
            <person name="Kojima M."/>
            <person name="Kondo S."/>
            <person name="Konno H."/>
            <person name="Nakano K."/>
            <person name="Ninomiya N."/>
            <person name="Nishio T."/>
            <person name="Okada M."/>
            <person name="Plessy C."/>
            <person name="Shibata K."/>
            <person name="Shiraki T."/>
            <person name="Suzuki S."/>
            <person name="Tagami M."/>
            <person name="Waki K."/>
            <person name="Watahiki A."/>
            <person name="Okamura-Oho Y."/>
            <person name="Suzuki H."/>
            <person name="Kawai J."/>
            <person name="Hayashizaki Y."/>
        </authorList>
    </citation>
    <scope>NUCLEOTIDE SEQUENCE [LARGE SCALE MRNA] (ISOFORM 2)</scope>
    <source>
        <strain>C57BL/6J</strain>
        <tissue>Testis</tissue>
    </source>
</reference>
<reference key="3">
    <citation type="journal article" date="2009" name="PLoS Biol.">
        <title>Lineage-specific biology revealed by a finished genome assembly of the mouse.</title>
        <authorList>
            <person name="Church D.M."/>
            <person name="Goodstadt L."/>
            <person name="Hillier L.W."/>
            <person name="Zody M.C."/>
            <person name="Goldstein S."/>
            <person name="She X."/>
            <person name="Bult C.J."/>
            <person name="Agarwala R."/>
            <person name="Cherry J.L."/>
            <person name="DiCuccio M."/>
            <person name="Hlavina W."/>
            <person name="Kapustin Y."/>
            <person name="Meric P."/>
            <person name="Maglott D."/>
            <person name="Birtle Z."/>
            <person name="Marques A.C."/>
            <person name="Graves T."/>
            <person name="Zhou S."/>
            <person name="Teague B."/>
            <person name="Potamousis K."/>
            <person name="Churas C."/>
            <person name="Place M."/>
            <person name="Herschleb J."/>
            <person name="Runnheim R."/>
            <person name="Forrest D."/>
            <person name="Amos-Landgraf J."/>
            <person name="Schwartz D.C."/>
            <person name="Cheng Z."/>
            <person name="Lindblad-Toh K."/>
            <person name="Eichler E.E."/>
            <person name="Ponting C.P."/>
        </authorList>
    </citation>
    <scope>NUCLEOTIDE SEQUENCE [LARGE SCALE GENOMIC DNA]</scope>
    <source>
        <strain>C57BL/6J</strain>
    </source>
</reference>
<reference evidence="12" key="4">
    <citation type="journal article" date="1999" name="EMBO J.">
        <title>Mammalian homologues of the plant tousled gene code for cell-cycle-regulated kinases with maximal activities linked to ongoing DNA replication.</title>
        <authorList>
            <person name="Sillje H.H.W."/>
            <person name="Takahashi K."/>
            <person name="Tanaka K."/>
            <person name="Van Houwe G."/>
            <person name="Nigg E.A."/>
        </authorList>
    </citation>
    <scope>TISSUE SPECIFICITY</scope>
</reference>
<reference key="5">
    <citation type="journal article" date="1999" name="J. Biol. Chem.">
        <title>Nuclear localization of protein kinase U-alpha is regulated by 14-3-3.</title>
        <authorList>
            <person name="Zhang S."/>
            <person name="Xing H."/>
            <person name="Muslin A.J."/>
        </authorList>
    </citation>
    <scope>SUBCELLULAR LOCATION</scope>
    <scope>TISSUE SPECIFICITY</scope>
    <scope>INTERACTION WITH YWHAZ</scope>
</reference>
<reference key="6">
    <citation type="journal article" date="2010" name="Cell">
        <title>A tissue-specific atlas of mouse protein phosphorylation and expression.</title>
        <authorList>
            <person name="Huttlin E.L."/>
            <person name="Jedrychowski M.P."/>
            <person name="Elias J.E."/>
            <person name="Goswami T."/>
            <person name="Rad R."/>
            <person name="Beausoleil S.A."/>
            <person name="Villen J."/>
            <person name="Haas W."/>
            <person name="Sowa M.E."/>
            <person name="Gygi S.P."/>
        </authorList>
    </citation>
    <scope>PHOSPHORYLATION [LARGE SCALE ANALYSIS] AT SER-94 AND SER-99 (ISOFORM 2)</scope>
    <scope>IDENTIFICATION BY MASS SPECTROMETRY [LARGE SCALE ANALYSIS]</scope>
    <source>
        <tissue>Brain</tissue>
        <tissue>Kidney</tissue>
        <tissue>Lung</tissue>
        <tissue>Pancreas</tissue>
        <tissue>Spleen</tissue>
        <tissue>Testis</tissue>
    </source>
</reference>
<evidence type="ECO:0000250" key="1"/>
<evidence type="ECO:0000250" key="2">
    <source>
        <dbReference type="UniProtKB" id="Q86UE8"/>
    </source>
</evidence>
<evidence type="ECO:0000255" key="3"/>
<evidence type="ECO:0000255" key="4">
    <source>
        <dbReference type="PROSITE-ProRule" id="PRU00159"/>
    </source>
</evidence>
<evidence type="ECO:0000255" key="5">
    <source>
        <dbReference type="PROSITE-ProRule" id="PRU10027"/>
    </source>
</evidence>
<evidence type="ECO:0000256" key="6">
    <source>
        <dbReference type="SAM" id="MobiDB-lite"/>
    </source>
</evidence>
<evidence type="ECO:0000269" key="7">
    <source>
    </source>
</evidence>
<evidence type="ECO:0000269" key="8">
    <source>
    </source>
</evidence>
<evidence type="ECO:0000269" key="9">
    <source>
    </source>
</evidence>
<evidence type="ECO:0000303" key="10">
    <source>
    </source>
</evidence>
<evidence type="ECO:0000303" key="11">
    <source>
    </source>
</evidence>
<evidence type="ECO:0000305" key="12"/>
<evidence type="ECO:0000312" key="13">
    <source>
        <dbReference type="EMBL" id="BAB29570.2"/>
    </source>
</evidence>
<evidence type="ECO:0007744" key="14">
    <source>
    </source>
</evidence>
<accession>O55047</accession>
<accession>B1ASU7</accession>
<accession>B1ASU8</accession>
<accession>Q9D5Y5</accession>